<name>RS17_KARMG</name>
<gene>
    <name evidence="1" type="primary">rpsQ</name>
    <name type="ordered locus">SMGWSS_230</name>
</gene>
<organism>
    <name type="scientific">Karelsulcia muelleri (strain GWSS)</name>
    <name type="common">Sulcia muelleri</name>
    <dbReference type="NCBI Taxonomy" id="444179"/>
    <lineage>
        <taxon>Bacteria</taxon>
        <taxon>Pseudomonadati</taxon>
        <taxon>Bacteroidota</taxon>
        <taxon>Flavobacteriia</taxon>
        <taxon>Flavobacteriales</taxon>
        <taxon>Candidatus Karelsulcia</taxon>
    </lineage>
</organism>
<keyword id="KW-0687">Ribonucleoprotein</keyword>
<keyword id="KW-0689">Ribosomal protein</keyword>
<keyword id="KW-0694">RNA-binding</keyword>
<keyword id="KW-0699">rRNA-binding</keyword>
<accession>A8Z676</accession>
<protein>
    <recommendedName>
        <fullName evidence="1">Small ribosomal subunit protein uS17</fullName>
    </recommendedName>
    <alternativeName>
        <fullName evidence="2">30S ribosomal protein S17</fullName>
    </alternativeName>
</protein>
<feature type="chain" id="PRO_1000143313" description="Small ribosomal subunit protein uS17">
    <location>
        <begin position="1"/>
        <end position="84"/>
    </location>
</feature>
<comment type="function">
    <text evidence="1">One of the primary rRNA binding proteins, it binds specifically to the 5'-end of 16S ribosomal RNA.</text>
</comment>
<comment type="subunit">
    <text evidence="1">Part of the 30S ribosomal subunit.</text>
</comment>
<comment type="similarity">
    <text evidence="1">Belongs to the universal ribosomal protein uS17 family.</text>
</comment>
<evidence type="ECO:0000255" key="1">
    <source>
        <dbReference type="HAMAP-Rule" id="MF_01345"/>
    </source>
</evidence>
<evidence type="ECO:0000305" key="2"/>
<reference key="1">
    <citation type="journal article" date="2007" name="Proc. Natl. Acad. Sci. U.S.A.">
        <title>Parallel genomic evolution and metabolic interdependence in an ancient symbiosis.</title>
        <authorList>
            <person name="McCutcheon J.P."/>
            <person name="Moran N.A."/>
        </authorList>
    </citation>
    <scope>NUCLEOTIDE SEQUENCE [LARGE SCALE GENOMIC DNA]</scope>
    <source>
        <strain>GWSS</strain>
    </source>
</reference>
<proteinExistence type="inferred from homology"/>
<dbReference type="EMBL" id="CP000770">
    <property type="protein sequence ID" value="ABS30627.1"/>
    <property type="molecule type" value="Genomic_DNA"/>
</dbReference>
<dbReference type="SMR" id="A8Z676"/>
<dbReference type="STRING" id="444179.SMGWSS_230"/>
<dbReference type="KEGG" id="smg:SMGWSS_230"/>
<dbReference type="HOGENOM" id="CLU_073626_1_0_10"/>
<dbReference type="Proteomes" id="UP000000781">
    <property type="component" value="Chromosome"/>
</dbReference>
<dbReference type="GO" id="GO:0022627">
    <property type="term" value="C:cytosolic small ribosomal subunit"/>
    <property type="evidence" value="ECO:0007669"/>
    <property type="project" value="TreeGrafter"/>
</dbReference>
<dbReference type="GO" id="GO:0019843">
    <property type="term" value="F:rRNA binding"/>
    <property type="evidence" value="ECO:0007669"/>
    <property type="project" value="UniProtKB-UniRule"/>
</dbReference>
<dbReference type="GO" id="GO:0003735">
    <property type="term" value="F:structural constituent of ribosome"/>
    <property type="evidence" value="ECO:0007669"/>
    <property type="project" value="InterPro"/>
</dbReference>
<dbReference type="GO" id="GO:0006412">
    <property type="term" value="P:translation"/>
    <property type="evidence" value="ECO:0007669"/>
    <property type="project" value="UniProtKB-UniRule"/>
</dbReference>
<dbReference type="CDD" id="cd00364">
    <property type="entry name" value="Ribosomal_uS17"/>
    <property type="match status" value="1"/>
</dbReference>
<dbReference type="Gene3D" id="2.40.50.140">
    <property type="entry name" value="Nucleic acid-binding proteins"/>
    <property type="match status" value="1"/>
</dbReference>
<dbReference type="HAMAP" id="MF_01345_B">
    <property type="entry name" value="Ribosomal_uS17_B"/>
    <property type="match status" value="1"/>
</dbReference>
<dbReference type="InterPro" id="IPR012340">
    <property type="entry name" value="NA-bd_OB-fold"/>
</dbReference>
<dbReference type="InterPro" id="IPR000266">
    <property type="entry name" value="Ribosomal_uS17"/>
</dbReference>
<dbReference type="InterPro" id="IPR019984">
    <property type="entry name" value="Ribosomal_uS17_bact/chlr"/>
</dbReference>
<dbReference type="InterPro" id="IPR019979">
    <property type="entry name" value="Ribosomal_uS17_CS"/>
</dbReference>
<dbReference type="NCBIfam" id="NF004123">
    <property type="entry name" value="PRK05610.1"/>
    <property type="match status" value="1"/>
</dbReference>
<dbReference type="NCBIfam" id="TIGR03635">
    <property type="entry name" value="uS17_bact"/>
    <property type="match status" value="1"/>
</dbReference>
<dbReference type="PANTHER" id="PTHR10744">
    <property type="entry name" value="40S RIBOSOMAL PROTEIN S11 FAMILY MEMBER"/>
    <property type="match status" value="1"/>
</dbReference>
<dbReference type="PANTHER" id="PTHR10744:SF1">
    <property type="entry name" value="SMALL RIBOSOMAL SUBUNIT PROTEIN US17M"/>
    <property type="match status" value="1"/>
</dbReference>
<dbReference type="Pfam" id="PF00366">
    <property type="entry name" value="Ribosomal_S17"/>
    <property type="match status" value="1"/>
</dbReference>
<dbReference type="PRINTS" id="PR00973">
    <property type="entry name" value="RIBOSOMALS17"/>
</dbReference>
<dbReference type="SUPFAM" id="SSF50249">
    <property type="entry name" value="Nucleic acid-binding proteins"/>
    <property type="match status" value="1"/>
</dbReference>
<dbReference type="PROSITE" id="PS00056">
    <property type="entry name" value="RIBOSOMAL_S17"/>
    <property type="match status" value="1"/>
</dbReference>
<sequence>MRKLKKKKEKIGIVISNKMKKTIIISETKRIKHPYYKKVILKKKKYYVHDEHNISNEGDLVKIIETRPLSKQKFWRLLKIVKKK</sequence>